<keyword id="KW-0963">Cytoplasm</keyword>
<keyword id="KW-1015">Disulfide bond</keyword>
<keyword id="KW-0255">Endonuclease</keyword>
<keyword id="KW-0325">Glycoprotein</keyword>
<keyword id="KW-0378">Hydrolase</keyword>
<keyword id="KW-0456">Lyase</keyword>
<keyword id="KW-0540">Nuclease</keyword>
<keyword id="KW-1185">Reference proteome</keyword>
<keyword id="KW-0732">Signal</keyword>
<keyword id="KW-0926">Vacuole</keyword>
<comment type="function">
    <text evidence="1">Rnase which modulates cell survival under stress conditions. Released from the vacuole to the cytoplasm during stress to promote tRNA and rRNA cleavage and to activate separately a downstream pathway that promotes cell death. Involved in cell size, vacuolar morphology and growth at high temperatures and high salt concentration (By similarity).</text>
</comment>
<comment type="catalytic activity">
    <reaction evidence="3 4">
        <text>a ribonucleotidyl-ribonucleotide-RNA + H2O = a 3'-end 3'-phospho-ribonucleotide-RNA + a 5'-end dephospho-ribonucleoside-RNA + H(+)</text>
        <dbReference type="Rhea" id="RHEA:68052"/>
        <dbReference type="Rhea" id="RHEA-COMP:10463"/>
        <dbReference type="Rhea" id="RHEA-COMP:13936"/>
        <dbReference type="Rhea" id="RHEA-COMP:17355"/>
        <dbReference type="ChEBI" id="CHEBI:15377"/>
        <dbReference type="ChEBI" id="CHEBI:15378"/>
        <dbReference type="ChEBI" id="CHEBI:83062"/>
        <dbReference type="ChEBI" id="CHEBI:138284"/>
        <dbReference type="ChEBI" id="CHEBI:173118"/>
        <dbReference type="EC" id="4.6.1.19"/>
    </reaction>
</comment>
<comment type="subcellular location">
    <subcellularLocation>
        <location>Vacuole lumen</location>
    </subcellularLocation>
    <subcellularLocation>
        <location>Cytoplasm</location>
    </subcellularLocation>
    <text evidence="1">Is released from the vacuole to the cytoplasm during stress conditions like oxidative stress or stationary phase stress.</text>
</comment>
<comment type="similarity">
    <text evidence="5">Belongs to the RNase T2 family.</text>
</comment>
<accession>Q6FP42</accession>
<reference key="1">
    <citation type="journal article" date="2004" name="Nature">
        <title>Genome evolution in yeasts.</title>
        <authorList>
            <person name="Dujon B."/>
            <person name="Sherman D."/>
            <person name="Fischer G."/>
            <person name="Durrens P."/>
            <person name="Casaregola S."/>
            <person name="Lafontaine I."/>
            <person name="de Montigny J."/>
            <person name="Marck C."/>
            <person name="Neuveglise C."/>
            <person name="Talla E."/>
            <person name="Goffard N."/>
            <person name="Frangeul L."/>
            <person name="Aigle M."/>
            <person name="Anthouard V."/>
            <person name="Babour A."/>
            <person name="Barbe V."/>
            <person name="Barnay S."/>
            <person name="Blanchin S."/>
            <person name="Beckerich J.-M."/>
            <person name="Beyne E."/>
            <person name="Bleykasten C."/>
            <person name="Boisrame A."/>
            <person name="Boyer J."/>
            <person name="Cattolico L."/>
            <person name="Confanioleri F."/>
            <person name="de Daruvar A."/>
            <person name="Despons L."/>
            <person name="Fabre E."/>
            <person name="Fairhead C."/>
            <person name="Ferry-Dumazet H."/>
            <person name="Groppi A."/>
            <person name="Hantraye F."/>
            <person name="Hennequin C."/>
            <person name="Jauniaux N."/>
            <person name="Joyet P."/>
            <person name="Kachouri R."/>
            <person name="Kerrest A."/>
            <person name="Koszul R."/>
            <person name="Lemaire M."/>
            <person name="Lesur I."/>
            <person name="Ma L."/>
            <person name="Muller H."/>
            <person name="Nicaud J.-M."/>
            <person name="Nikolski M."/>
            <person name="Oztas S."/>
            <person name="Ozier-Kalogeropoulos O."/>
            <person name="Pellenz S."/>
            <person name="Potier S."/>
            <person name="Richard G.-F."/>
            <person name="Straub M.-L."/>
            <person name="Suleau A."/>
            <person name="Swennen D."/>
            <person name="Tekaia F."/>
            <person name="Wesolowski-Louvel M."/>
            <person name="Westhof E."/>
            <person name="Wirth B."/>
            <person name="Zeniou-Meyer M."/>
            <person name="Zivanovic Y."/>
            <person name="Bolotin-Fukuhara M."/>
            <person name="Thierry A."/>
            <person name="Bouchier C."/>
            <person name="Caudron B."/>
            <person name="Scarpelli C."/>
            <person name="Gaillardin C."/>
            <person name="Weissenbach J."/>
            <person name="Wincker P."/>
            <person name="Souciet J.-L."/>
        </authorList>
    </citation>
    <scope>NUCLEOTIDE SEQUENCE [LARGE SCALE GENOMIC DNA]</scope>
    <source>
        <strain>ATCC 2001 / BCRC 20586 / JCM 3761 / NBRC 0622 / NRRL Y-65 / CBS 138</strain>
    </source>
</reference>
<name>RNY1_CANGA</name>
<sequence length="433" mass="49674">MILASVLKAFQGLQTGLQHSYQDGSPSCPINLPLSCGNETAISDLCCFEYPGGILLMTQFWNYAPSKPNLNRTELEEELGPVDSFTIHGLWPDDCMGGYPQFCKRDLFIDDVDYLLKSDAFNNDDTLPIQGEELLNNLNKYWKSNNGNHESLWIHEYNKHGTCLSTLQPQCYSRWNPTTSQKGPKYYKKKAVYDYFRISYDLFQKLNTYEMLAKHNITPSNDTSYTKSEILSALSSEFQGTQAHINCNSQNALTEVWYYHQLNGSILNEDFIPLDPLRSMSRCKDQGIKYYPKGYQRRDNRGPNKKPISRGTIRISQYGGFLIKTGRWMKRGTPANFELIESKYGNYLLKSRMGYCTVHNDKSQLDCSSRSPDYATQFDYNEEKGILGYSGSFEWGAESAPKNGRTSRSVVFAVSNEKNSNLKYKFQLKFNRK</sequence>
<organism>
    <name type="scientific">Candida glabrata (strain ATCC 2001 / BCRC 20586 / JCM 3761 / NBRC 0622 / NRRL Y-65 / CBS 138)</name>
    <name type="common">Yeast</name>
    <name type="synonym">Nakaseomyces glabratus</name>
    <dbReference type="NCBI Taxonomy" id="284593"/>
    <lineage>
        <taxon>Eukaryota</taxon>
        <taxon>Fungi</taxon>
        <taxon>Dikarya</taxon>
        <taxon>Ascomycota</taxon>
        <taxon>Saccharomycotina</taxon>
        <taxon>Saccharomycetes</taxon>
        <taxon>Saccharomycetales</taxon>
        <taxon>Saccharomycetaceae</taxon>
        <taxon>Nakaseomyces</taxon>
    </lineage>
</organism>
<gene>
    <name type="primary">RNY1</name>
    <name type="ordered locus">CAGL0J06820g</name>
</gene>
<evidence type="ECO:0000250" key="1"/>
<evidence type="ECO:0000255" key="2"/>
<evidence type="ECO:0000255" key="3">
    <source>
        <dbReference type="PROSITE-ProRule" id="PRU10045"/>
    </source>
</evidence>
<evidence type="ECO:0000255" key="4">
    <source>
        <dbReference type="PROSITE-ProRule" id="PRU10046"/>
    </source>
</evidence>
<evidence type="ECO:0000305" key="5"/>
<protein>
    <recommendedName>
        <fullName>Ribonuclease T2-like</fullName>
        <shortName>RNase T2-like</shortName>
        <ecNumber>4.6.1.19</ecNumber>
    </recommendedName>
</protein>
<feature type="signal peptide" evidence="2">
    <location>
        <begin position="1"/>
        <end status="unknown"/>
    </location>
</feature>
<feature type="chain" id="PRO_0000043253" description="Ribonuclease T2-like">
    <location>
        <begin status="unknown"/>
        <end position="433"/>
    </location>
</feature>
<feature type="active site" evidence="1">
    <location>
        <position position="88"/>
    </location>
</feature>
<feature type="active site" evidence="1">
    <location>
        <position position="156"/>
    </location>
</feature>
<feature type="active site" evidence="1">
    <location>
        <position position="160"/>
    </location>
</feature>
<feature type="glycosylation site" description="N-linked (GlcNAc...) asparagine" evidence="2">
    <location>
        <position position="38"/>
    </location>
</feature>
<feature type="glycosylation site" description="N-linked (GlcNAc...) asparagine" evidence="2">
    <location>
        <position position="71"/>
    </location>
</feature>
<feature type="glycosylation site" description="N-linked (GlcNAc...) asparagine" evidence="2">
    <location>
        <position position="221"/>
    </location>
</feature>
<feature type="glycosylation site" description="N-linked (GlcNAc...) asparagine" evidence="2">
    <location>
        <position position="263"/>
    </location>
</feature>
<feature type="disulfide bond" evidence="1">
    <location>
        <begin position="28"/>
        <end position="47"/>
    </location>
</feature>
<feature type="disulfide bond" evidence="1">
    <location>
        <begin position="36"/>
        <end position="95"/>
    </location>
</feature>
<feature type="disulfide bond" evidence="1">
    <location>
        <begin position="46"/>
        <end position="171"/>
    </location>
</feature>
<feature type="disulfide bond" evidence="1">
    <location>
        <begin position="103"/>
        <end position="163"/>
    </location>
</feature>
<feature type="disulfide bond" evidence="1">
    <location>
        <begin position="247"/>
        <end position="283"/>
    </location>
</feature>
<dbReference type="EC" id="4.6.1.19"/>
<dbReference type="EMBL" id="CR380956">
    <property type="protein sequence ID" value="CAG60953.1"/>
    <property type="molecule type" value="Genomic_DNA"/>
</dbReference>
<dbReference type="RefSeq" id="XP_448002.1">
    <property type="nucleotide sequence ID" value="XM_448002.1"/>
</dbReference>
<dbReference type="SMR" id="Q6FP42"/>
<dbReference type="FunCoup" id="Q6FP42">
    <property type="interactions" value="164"/>
</dbReference>
<dbReference type="STRING" id="284593.Q6FP42"/>
<dbReference type="GlyCosmos" id="Q6FP42">
    <property type="glycosylation" value="4 sites, No reported glycans"/>
</dbReference>
<dbReference type="EnsemblFungi" id="CAGL0J06820g-T">
    <property type="protein sequence ID" value="CAGL0J06820g-T-p1"/>
    <property type="gene ID" value="CAGL0J06820g"/>
</dbReference>
<dbReference type="KEGG" id="cgr:2889620"/>
<dbReference type="CGD" id="CAL0133378">
    <property type="gene designation" value="CAGL0J06820g"/>
</dbReference>
<dbReference type="VEuPathDB" id="FungiDB:CAGL0J06820g"/>
<dbReference type="eggNOG" id="KOG1642">
    <property type="taxonomic scope" value="Eukaryota"/>
</dbReference>
<dbReference type="HOGENOM" id="CLU_037966_0_1_1"/>
<dbReference type="InParanoid" id="Q6FP42"/>
<dbReference type="OMA" id="HESLWIH"/>
<dbReference type="Proteomes" id="UP000002428">
    <property type="component" value="Chromosome J"/>
</dbReference>
<dbReference type="GO" id="GO:0005829">
    <property type="term" value="C:cytosol"/>
    <property type="evidence" value="ECO:0007669"/>
    <property type="project" value="EnsemblFungi"/>
</dbReference>
<dbReference type="GO" id="GO:0005576">
    <property type="term" value="C:extracellular region"/>
    <property type="evidence" value="ECO:0007669"/>
    <property type="project" value="EnsemblFungi"/>
</dbReference>
<dbReference type="GO" id="GO:0000324">
    <property type="term" value="C:fungal-type vacuole"/>
    <property type="evidence" value="ECO:0007669"/>
    <property type="project" value="EnsemblFungi"/>
</dbReference>
<dbReference type="GO" id="GO:0005775">
    <property type="term" value="C:vacuolar lumen"/>
    <property type="evidence" value="ECO:0007669"/>
    <property type="project" value="UniProtKB-SubCell"/>
</dbReference>
<dbReference type="GO" id="GO:0033897">
    <property type="term" value="F:ribonuclease T2 activity"/>
    <property type="evidence" value="ECO:0007669"/>
    <property type="project" value="UniProtKB-EC"/>
</dbReference>
<dbReference type="GO" id="GO:0003723">
    <property type="term" value="F:RNA binding"/>
    <property type="evidence" value="ECO:0007669"/>
    <property type="project" value="InterPro"/>
</dbReference>
<dbReference type="GO" id="GO:0006915">
    <property type="term" value="P:apoptotic process"/>
    <property type="evidence" value="ECO:0007669"/>
    <property type="project" value="EnsemblFungi"/>
</dbReference>
<dbReference type="GO" id="GO:0000902">
    <property type="term" value="P:cell morphogenesis"/>
    <property type="evidence" value="ECO:0007669"/>
    <property type="project" value="EnsemblFungi"/>
</dbReference>
<dbReference type="GO" id="GO:0006402">
    <property type="term" value="P:mRNA catabolic process"/>
    <property type="evidence" value="ECO:0007669"/>
    <property type="project" value="EnsemblFungi"/>
</dbReference>
<dbReference type="CDD" id="cd01061">
    <property type="entry name" value="RNase_T2_euk"/>
    <property type="match status" value="1"/>
</dbReference>
<dbReference type="FunFam" id="3.90.730.10:FF:000004">
    <property type="entry name" value="Ribonuclease T2-like"/>
    <property type="match status" value="1"/>
</dbReference>
<dbReference type="Gene3D" id="3.90.730.10">
    <property type="entry name" value="Ribonuclease T2-like"/>
    <property type="match status" value="1"/>
</dbReference>
<dbReference type="InterPro" id="IPR033697">
    <property type="entry name" value="Ribonuclease_T2_eukaryotic"/>
</dbReference>
<dbReference type="InterPro" id="IPR001568">
    <property type="entry name" value="RNase_T2-like"/>
</dbReference>
<dbReference type="InterPro" id="IPR036430">
    <property type="entry name" value="RNase_T2-like_sf"/>
</dbReference>
<dbReference type="InterPro" id="IPR018188">
    <property type="entry name" value="RNase_T2_His_AS_1"/>
</dbReference>
<dbReference type="InterPro" id="IPR033130">
    <property type="entry name" value="RNase_T2_His_AS_2"/>
</dbReference>
<dbReference type="PANTHER" id="PTHR11240">
    <property type="entry name" value="RIBONUCLEASE T2"/>
    <property type="match status" value="1"/>
</dbReference>
<dbReference type="PANTHER" id="PTHR11240:SF22">
    <property type="entry name" value="RIBONUCLEASE T2"/>
    <property type="match status" value="1"/>
</dbReference>
<dbReference type="Pfam" id="PF00445">
    <property type="entry name" value="Ribonuclease_T2"/>
    <property type="match status" value="1"/>
</dbReference>
<dbReference type="Pfam" id="PF25488">
    <property type="entry name" value="RNaseT2L_C"/>
    <property type="match status" value="1"/>
</dbReference>
<dbReference type="SUPFAM" id="SSF55895">
    <property type="entry name" value="Ribonuclease Rh-like"/>
    <property type="match status" value="1"/>
</dbReference>
<dbReference type="PROSITE" id="PS00530">
    <property type="entry name" value="RNASE_T2_1"/>
    <property type="match status" value="1"/>
</dbReference>
<dbReference type="PROSITE" id="PS00531">
    <property type="entry name" value="RNASE_T2_2"/>
    <property type="match status" value="1"/>
</dbReference>
<proteinExistence type="inferred from homology"/>